<evidence type="ECO:0000269" key="1">
    <source>
    </source>
</evidence>
<evidence type="ECO:0000269" key="2">
    <source>
    </source>
</evidence>
<evidence type="ECO:0000303" key="3">
    <source>
    </source>
</evidence>
<evidence type="ECO:0000305" key="4"/>
<evidence type="ECO:0000312" key="5">
    <source>
        <dbReference type="HGNC" id="HGNC:29468"/>
    </source>
</evidence>
<name>KPLCE_HUMAN</name>
<proteinExistence type="evidence at protein level"/>
<reference key="1">
    <citation type="journal article" date="2006" name="Nature">
        <title>The DNA sequence and biological annotation of human chromosome 1.</title>
        <authorList>
            <person name="Gregory S.G."/>
            <person name="Barlow K.F."/>
            <person name="McLay K.E."/>
            <person name="Kaul R."/>
            <person name="Swarbreck D."/>
            <person name="Dunham A."/>
            <person name="Scott C.E."/>
            <person name="Howe K.L."/>
            <person name="Woodfine K."/>
            <person name="Spencer C.C.A."/>
            <person name="Jones M.C."/>
            <person name="Gillson C."/>
            <person name="Searle S."/>
            <person name="Zhou Y."/>
            <person name="Kokocinski F."/>
            <person name="McDonald L."/>
            <person name="Evans R."/>
            <person name="Phillips K."/>
            <person name="Atkinson A."/>
            <person name="Cooper R."/>
            <person name="Jones C."/>
            <person name="Hall R.E."/>
            <person name="Andrews T.D."/>
            <person name="Lloyd C."/>
            <person name="Ainscough R."/>
            <person name="Almeida J.P."/>
            <person name="Ambrose K.D."/>
            <person name="Anderson F."/>
            <person name="Andrew R.W."/>
            <person name="Ashwell R.I.S."/>
            <person name="Aubin K."/>
            <person name="Babbage A.K."/>
            <person name="Bagguley C.L."/>
            <person name="Bailey J."/>
            <person name="Beasley H."/>
            <person name="Bethel G."/>
            <person name="Bird C.P."/>
            <person name="Bray-Allen S."/>
            <person name="Brown J.Y."/>
            <person name="Brown A.J."/>
            <person name="Buckley D."/>
            <person name="Burton J."/>
            <person name="Bye J."/>
            <person name="Carder C."/>
            <person name="Chapman J.C."/>
            <person name="Clark S.Y."/>
            <person name="Clarke G."/>
            <person name="Clee C."/>
            <person name="Cobley V."/>
            <person name="Collier R.E."/>
            <person name="Corby N."/>
            <person name="Coville G.J."/>
            <person name="Davies J."/>
            <person name="Deadman R."/>
            <person name="Dunn M."/>
            <person name="Earthrowl M."/>
            <person name="Ellington A.G."/>
            <person name="Errington H."/>
            <person name="Frankish A."/>
            <person name="Frankland J."/>
            <person name="French L."/>
            <person name="Garner P."/>
            <person name="Garnett J."/>
            <person name="Gay L."/>
            <person name="Ghori M.R.J."/>
            <person name="Gibson R."/>
            <person name="Gilby L.M."/>
            <person name="Gillett W."/>
            <person name="Glithero R.J."/>
            <person name="Grafham D.V."/>
            <person name="Griffiths C."/>
            <person name="Griffiths-Jones S."/>
            <person name="Grocock R."/>
            <person name="Hammond S."/>
            <person name="Harrison E.S.I."/>
            <person name="Hart E."/>
            <person name="Haugen E."/>
            <person name="Heath P.D."/>
            <person name="Holmes S."/>
            <person name="Holt K."/>
            <person name="Howden P.J."/>
            <person name="Hunt A.R."/>
            <person name="Hunt S.E."/>
            <person name="Hunter G."/>
            <person name="Isherwood J."/>
            <person name="James R."/>
            <person name="Johnson C."/>
            <person name="Johnson D."/>
            <person name="Joy A."/>
            <person name="Kay M."/>
            <person name="Kershaw J.K."/>
            <person name="Kibukawa M."/>
            <person name="Kimberley A.M."/>
            <person name="King A."/>
            <person name="Knights A.J."/>
            <person name="Lad H."/>
            <person name="Laird G."/>
            <person name="Lawlor S."/>
            <person name="Leongamornlert D.A."/>
            <person name="Lloyd D.M."/>
            <person name="Loveland J."/>
            <person name="Lovell J."/>
            <person name="Lush M.J."/>
            <person name="Lyne R."/>
            <person name="Martin S."/>
            <person name="Mashreghi-Mohammadi M."/>
            <person name="Matthews L."/>
            <person name="Matthews N.S.W."/>
            <person name="McLaren S."/>
            <person name="Milne S."/>
            <person name="Mistry S."/>
            <person name="Moore M.J.F."/>
            <person name="Nickerson T."/>
            <person name="O'Dell C.N."/>
            <person name="Oliver K."/>
            <person name="Palmeiri A."/>
            <person name="Palmer S.A."/>
            <person name="Parker A."/>
            <person name="Patel D."/>
            <person name="Pearce A.V."/>
            <person name="Peck A.I."/>
            <person name="Pelan S."/>
            <person name="Phelps K."/>
            <person name="Phillimore B.J."/>
            <person name="Plumb R."/>
            <person name="Rajan J."/>
            <person name="Raymond C."/>
            <person name="Rouse G."/>
            <person name="Saenphimmachak C."/>
            <person name="Sehra H.K."/>
            <person name="Sheridan E."/>
            <person name="Shownkeen R."/>
            <person name="Sims S."/>
            <person name="Skuce C.D."/>
            <person name="Smith M."/>
            <person name="Steward C."/>
            <person name="Subramanian S."/>
            <person name="Sycamore N."/>
            <person name="Tracey A."/>
            <person name="Tromans A."/>
            <person name="Van Helmond Z."/>
            <person name="Wall M."/>
            <person name="Wallis J.M."/>
            <person name="White S."/>
            <person name="Whitehead S.L."/>
            <person name="Wilkinson J.E."/>
            <person name="Willey D.L."/>
            <person name="Williams H."/>
            <person name="Wilming L."/>
            <person name="Wray P.W."/>
            <person name="Wu Z."/>
            <person name="Coulson A."/>
            <person name="Vaudin M."/>
            <person name="Sulston J.E."/>
            <person name="Durbin R.M."/>
            <person name="Hubbard T."/>
            <person name="Wooster R."/>
            <person name="Dunham I."/>
            <person name="Carter N.P."/>
            <person name="McVean G."/>
            <person name="Ross M.T."/>
            <person name="Harrow J."/>
            <person name="Olson M.V."/>
            <person name="Beck S."/>
            <person name="Rogers J."/>
            <person name="Bentley D.R."/>
        </authorList>
    </citation>
    <scope>NUCLEOTIDE SEQUENCE [LARGE SCALE GENOMIC DNA]</scope>
</reference>
<reference key="2">
    <citation type="submission" date="2005-09" db="EMBL/GenBank/DDBJ databases">
        <authorList>
            <person name="Mural R.J."/>
            <person name="Istrail S."/>
            <person name="Sutton G.G."/>
            <person name="Florea L."/>
            <person name="Halpern A.L."/>
            <person name="Mobarry C.M."/>
            <person name="Lippert R."/>
            <person name="Walenz B."/>
            <person name="Shatkay H."/>
            <person name="Dew I."/>
            <person name="Miller J.R."/>
            <person name="Flanigan M.J."/>
            <person name="Edwards N.J."/>
            <person name="Bolanos R."/>
            <person name="Fasulo D."/>
            <person name="Halldorsson B.V."/>
            <person name="Hannenhalli S."/>
            <person name="Turner R."/>
            <person name="Yooseph S."/>
            <person name="Lu F."/>
            <person name="Nusskern D.R."/>
            <person name="Shue B.C."/>
            <person name="Zheng X.H."/>
            <person name="Zhong F."/>
            <person name="Delcher A.L."/>
            <person name="Huson D.H."/>
            <person name="Kravitz S.A."/>
            <person name="Mouchard L."/>
            <person name="Reinert K."/>
            <person name="Remington K.A."/>
            <person name="Clark A.G."/>
            <person name="Waterman M.S."/>
            <person name="Eichler E.E."/>
            <person name="Adams M.D."/>
            <person name="Hunkapiller M.W."/>
            <person name="Myers E.W."/>
            <person name="Venter J.C."/>
        </authorList>
    </citation>
    <scope>NUCLEOTIDE SEQUENCE [LARGE SCALE GENOMIC DNA]</scope>
</reference>
<reference key="3">
    <citation type="journal article" date="1997" name="Genomics">
        <title>Positional cloning of novel skin-specific genes from the human epidermal differentiation complex.</title>
        <authorList>
            <person name="Zhao X.P."/>
            <person name="Elder J.T."/>
        </authorList>
    </citation>
    <scope>NUCLEOTIDE SEQUENCE [MRNA] OF 131-250</scope>
    <scope>TISSUE SPECIFICITY</scope>
    <source>
        <tissue>Skin</tissue>
    </source>
</reference>
<reference key="4">
    <citation type="journal article" date="2011" name="BMC Syst. Biol.">
        <title>Initial characterization of the human central proteome.</title>
        <authorList>
            <person name="Burkard T.R."/>
            <person name="Planyavsky M."/>
            <person name="Kaupe I."/>
            <person name="Breitwieser F.P."/>
            <person name="Buerckstuemmer T."/>
            <person name="Bennett K.L."/>
            <person name="Superti-Furga G."/>
            <person name="Colinge J."/>
        </authorList>
    </citation>
    <scope>IDENTIFICATION BY MASS SPECTROMETRY [LARGE SCALE ANALYSIS]</scope>
</reference>
<reference key="5">
    <citation type="journal article" date="2015" name="J. Histochem. Cytochem.">
        <title>Expression of human skin-specific genes defined by transcriptomics and antibody-based profiling.</title>
        <authorList>
            <person name="Edqvist P.H."/>
            <person name="Fagerberg L."/>
            <person name="Hallstroem B.M."/>
            <person name="Danielsson A."/>
            <person name="Edlund K."/>
            <person name="Uhlen M."/>
            <person name="Ponten F."/>
        </authorList>
    </citation>
    <scope>TISSUE SPECIFICITY</scope>
</reference>
<keyword id="KW-1267">Proteomics identification</keyword>
<keyword id="KW-1185">Reference proteome</keyword>
<protein>
    <recommendedName>
        <fullName evidence="4">Protein KPLCE</fullName>
    </recommendedName>
    <alternativeName>
        <fullName evidence="5">KPRP N-terminal and LCE C-terminal-like protein</fullName>
    </alternativeName>
    <alternativeName>
        <fullName evidence="3">Skin-specific protein 32</fullName>
    </alternativeName>
</protein>
<feature type="chain" id="PRO_0000307808" description="Protein KPLCE">
    <location>
        <begin position="1"/>
        <end position="250"/>
    </location>
</feature>
<feature type="sequence variant" id="VAR_059739" description="In dbSNP:rs1332500.">
    <original>S</original>
    <variation>T</variation>
    <location>
        <position position="26"/>
    </location>
</feature>
<feature type="sequence variant" id="VAR_059740" description="In dbSNP:rs873775.">
    <original>T</original>
    <variation>P</variation>
    <location>
        <position position="159"/>
    </location>
</feature>
<feature type="sequence variant" id="VAR_061726" description="In dbSNP:rs59194678.">
    <original>L</original>
    <variation>V</variation>
    <location>
        <position position="173"/>
    </location>
</feature>
<feature type="sequence conflict" description="In Ref. 3; AAB83961." evidence="4" ref="3">
    <original>R</original>
    <variation>K</variation>
    <location>
        <position position="235"/>
    </location>
</feature>
<feature type="sequence conflict" description="In Ref. 3; AAB83961." evidence="4" ref="3">
    <original>G</original>
    <variation>S</variation>
    <location>
        <position position="238"/>
    </location>
</feature>
<comment type="tissue specificity">
    <text evidence="1 2">Skin-specific.</text>
</comment>
<comment type="sequence caution" evidence="4">
    <conflict type="frameshift">
        <sequence resource="EMBL-CDS" id="AAB83961"/>
    </conflict>
</comment>
<dbReference type="EMBL" id="AL353779">
    <property type="status" value="NOT_ANNOTATED_CDS"/>
    <property type="molecule type" value="Genomic_DNA"/>
</dbReference>
<dbReference type="EMBL" id="CH471121">
    <property type="protein sequence ID" value="EAW53369.1"/>
    <property type="molecule type" value="Genomic_DNA"/>
</dbReference>
<dbReference type="EMBL" id="AF005081">
    <property type="protein sequence ID" value="AAB83961.1"/>
    <property type="status" value="ALT_FRAME"/>
    <property type="molecule type" value="mRNA"/>
</dbReference>
<dbReference type="CCDS" id="CCDS44226.1"/>
<dbReference type="RefSeq" id="NP_001019850.1">
    <property type="nucleotide sequence ID" value="NM_001024679.3"/>
</dbReference>
<dbReference type="BioGRID" id="139295">
    <property type="interactions" value="55"/>
</dbReference>
<dbReference type="FunCoup" id="Q5T750">
    <property type="interactions" value="63"/>
</dbReference>
<dbReference type="IntAct" id="Q5T750">
    <property type="interactions" value="13"/>
</dbReference>
<dbReference type="MINT" id="Q5T750"/>
<dbReference type="STRING" id="9606.ENSP00000357764"/>
<dbReference type="GlyGen" id="Q5T750">
    <property type="glycosylation" value="1 site, 1 O-linked glycan (1 site)"/>
</dbReference>
<dbReference type="iPTMnet" id="Q5T750"/>
<dbReference type="PhosphoSitePlus" id="Q5T750"/>
<dbReference type="BioMuta" id="C1orf68"/>
<dbReference type="DMDM" id="74745320"/>
<dbReference type="jPOST" id="Q5T750"/>
<dbReference type="MassIVE" id="Q5T750"/>
<dbReference type="PaxDb" id="9606-ENSP00000357764"/>
<dbReference type="PeptideAtlas" id="Q5T750"/>
<dbReference type="ProteomicsDB" id="64637"/>
<dbReference type="Antibodypedia" id="50316">
    <property type="antibodies" value="11 antibodies from 7 providers"/>
</dbReference>
<dbReference type="DNASU" id="100129271"/>
<dbReference type="Ensembl" id="ENST00000368775.3">
    <property type="protein sequence ID" value="ENSP00000357764.2"/>
    <property type="gene ID" value="ENSG00000198854.5"/>
</dbReference>
<dbReference type="GeneID" id="100129271"/>
<dbReference type="KEGG" id="hsa:100129271"/>
<dbReference type="MANE-Select" id="ENST00000368775.3">
    <property type="protein sequence ID" value="ENSP00000357764.2"/>
    <property type="RefSeq nucleotide sequence ID" value="NM_001024679.3"/>
    <property type="RefSeq protein sequence ID" value="NP_001019850.1"/>
</dbReference>
<dbReference type="UCSC" id="uc010pdu.3">
    <property type="organism name" value="human"/>
</dbReference>
<dbReference type="AGR" id="HGNC:29468"/>
<dbReference type="CTD" id="100129271"/>
<dbReference type="DisGeNET" id="100129271"/>
<dbReference type="GeneCards" id="KPLCE"/>
<dbReference type="HGNC" id="HGNC:29468">
    <property type="gene designation" value="KPLCE"/>
</dbReference>
<dbReference type="HPA" id="ENSG00000198854">
    <property type="expression patterns" value="Tissue enriched (skin)"/>
</dbReference>
<dbReference type="neXtProt" id="NX_Q5T750"/>
<dbReference type="OpenTargets" id="ENSG00000198854"/>
<dbReference type="PharmGKB" id="PA142672518"/>
<dbReference type="VEuPathDB" id="HostDB:ENSG00000198854"/>
<dbReference type="eggNOG" id="KOG4726">
    <property type="taxonomic scope" value="Eukaryota"/>
</dbReference>
<dbReference type="GeneTree" id="ENSGT00730000111580"/>
<dbReference type="HOGENOM" id="CLU_085400_0_0_1"/>
<dbReference type="InParanoid" id="Q5T750"/>
<dbReference type="OMA" id="QTYVKCQ"/>
<dbReference type="OrthoDB" id="12293at9604"/>
<dbReference type="PAN-GO" id="Q5T750">
    <property type="GO annotations" value="0 GO annotations based on evolutionary models"/>
</dbReference>
<dbReference type="PhylomeDB" id="Q5T750"/>
<dbReference type="TreeFam" id="TF351578"/>
<dbReference type="PathwayCommons" id="Q5T750"/>
<dbReference type="SignaLink" id="Q5T750"/>
<dbReference type="BioGRID-ORCS" id="100129271">
    <property type="hits" value="7 hits in 1114 CRISPR screens"/>
</dbReference>
<dbReference type="GenomeRNAi" id="100129271"/>
<dbReference type="Pharos" id="Q5T750">
    <property type="development level" value="Tdark"/>
</dbReference>
<dbReference type="PRO" id="PR:Q5T750"/>
<dbReference type="Proteomes" id="UP000005640">
    <property type="component" value="Chromosome 1"/>
</dbReference>
<dbReference type="RNAct" id="Q5T750">
    <property type="molecule type" value="protein"/>
</dbReference>
<dbReference type="Bgee" id="ENSG00000198854">
    <property type="expression patterns" value="Expressed in skin of leg and 82 other cell types or tissues"/>
</dbReference>
<dbReference type="GO" id="GO:0008544">
    <property type="term" value="P:epidermis development"/>
    <property type="evidence" value="ECO:0000303"/>
    <property type="project" value="UniProtKB"/>
</dbReference>
<dbReference type="InterPro" id="IPR053348">
    <property type="entry name" value="KPLCE"/>
</dbReference>
<dbReference type="PANTHER" id="PTHR35022">
    <property type="entry name" value="G_PROTEIN_RECEP_F1_2 DOMAIN-CONTAINING PROTEIN"/>
    <property type="match status" value="1"/>
</dbReference>
<dbReference type="PANTHER" id="PTHR35022:SF28">
    <property type="entry name" value="PROTEIN KPLCE"/>
    <property type="match status" value="1"/>
</dbReference>
<dbReference type="PRINTS" id="PR00021">
    <property type="entry name" value="PRORICH"/>
</dbReference>
<sequence>MCDQQKQPQFPPSCVKGSGLGAGQGSNGASVKCPVPCQTQTVCVTGPAPCPTQTYVKYQVPCQTQTYVKCPAPCQRTYVKYPTPCQTYVKCPAPCQTTYVKCPTPCQTYVKCPAPCQMTYIKSPAPCQTQTCYVQGASPCQSYYVQAPASGSTSQYCVTDPCSAPCSTSYCCLAPRTFGVSPLRRWIQRPQNCNTGSSGCCENSGSSGCCGSGGCGCSCGCGSSGCCCLGIIPMRSRGPACCDHEDDCCC</sequence>
<organism>
    <name type="scientific">Homo sapiens</name>
    <name type="common">Human</name>
    <dbReference type="NCBI Taxonomy" id="9606"/>
    <lineage>
        <taxon>Eukaryota</taxon>
        <taxon>Metazoa</taxon>
        <taxon>Chordata</taxon>
        <taxon>Craniata</taxon>
        <taxon>Vertebrata</taxon>
        <taxon>Euteleostomi</taxon>
        <taxon>Mammalia</taxon>
        <taxon>Eutheria</taxon>
        <taxon>Euarchontoglires</taxon>
        <taxon>Primates</taxon>
        <taxon>Haplorrhini</taxon>
        <taxon>Catarrhini</taxon>
        <taxon>Hominidae</taxon>
        <taxon>Homo</taxon>
    </lineage>
</organism>
<accession>Q5T750</accession>
<accession>O14634</accession>
<gene>
    <name evidence="5" type="primary">KPLCE</name>
    <name type="synonym">C1orf68</name>
    <name evidence="5" type="synonym">LEP7</name>
    <name evidence="3" type="synonym">XP32</name>
</gene>